<reference key="1">
    <citation type="journal article" date="2003" name="Nucleic Acids Res.">
        <title>The complete genome sequence and analysis of Corynebacterium diphtheriae NCTC13129.</title>
        <authorList>
            <person name="Cerdeno-Tarraga A.-M."/>
            <person name="Efstratiou A."/>
            <person name="Dover L.G."/>
            <person name="Holden M.T.G."/>
            <person name="Pallen M.J."/>
            <person name="Bentley S.D."/>
            <person name="Besra G.S."/>
            <person name="Churcher C.M."/>
            <person name="James K.D."/>
            <person name="De Zoysa A."/>
            <person name="Chillingworth T."/>
            <person name="Cronin A."/>
            <person name="Dowd L."/>
            <person name="Feltwell T."/>
            <person name="Hamlin N."/>
            <person name="Holroyd S."/>
            <person name="Jagels K."/>
            <person name="Moule S."/>
            <person name="Quail M.A."/>
            <person name="Rabbinowitsch E."/>
            <person name="Rutherford K.M."/>
            <person name="Thomson N.R."/>
            <person name="Unwin L."/>
            <person name="Whitehead S."/>
            <person name="Barrell B.G."/>
            <person name="Parkhill J."/>
        </authorList>
    </citation>
    <scope>NUCLEOTIDE SEQUENCE [LARGE SCALE GENOMIC DNA]</scope>
    <source>
        <strain>ATCC 700971 / NCTC 13129 / Biotype gravis</strain>
    </source>
</reference>
<comment type="function">
    <text evidence="1">May play a key role in the regulation of the intracellular concentration of adenosylhomocysteine.</text>
</comment>
<comment type="catalytic activity">
    <reaction evidence="1">
        <text>S-adenosyl-L-homocysteine + H2O = L-homocysteine + adenosine</text>
        <dbReference type="Rhea" id="RHEA:21708"/>
        <dbReference type="ChEBI" id="CHEBI:15377"/>
        <dbReference type="ChEBI" id="CHEBI:16335"/>
        <dbReference type="ChEBI" id="CHEBI:57856"/>
        <dbReference type="ChEBI" id="CHEBI:58199"/>
        <dbReference type="EC" id="3.13.2.1"/>
    </reaction>
</comment>
<comment type="cofactor">
    <cofactor evidence="1">
        <name>NAD(+)</name>
        <dbReference type="ChEBI" id="CHEBI:57540"/>
    </cofactor>
    <text evidence="1">Binds 1 NAD(+) per subunit.</text>
</comment>
<comment type="pathway">
    <text evidence="1">Amino-acid biosynthesis; L-homocysteine biosynthesis; L-homocysteine from S-adenosyl-L-homocysteine: step 1/1.</text>
</comment>
<comment type="subcellular location">
    <subcellularLocation>
        <location evidence="1">Cytoplasm</location>
    </subcellularLocation>
</comment>
<comment type="similarity">
    <text evidence="1">Belongs to the adenosylhomocysteinase family.</text>
</comment>
<dbReference type="EC" id="3.13.2.1" evidence="1"/>
<dbReference type="EMBL" id="BX248355">
    <property type="protein sequence ID" value="CAE49209.1"/>
    <property type="molecule type" value="Genomic_DNA"/>
</dbReference>
<dbReference type="RefSeq" id="WP_004567096.1">
    <property type="nucleotide sequence ID" value="NC_002935.2"/>
</dbReference>
<dbReference type="SMR" id="P61456"/>
<dbReference type="STRING" id="257309.DIP0692"/>
<dbReference type="KEGG" id="cdi:DIP0692"/>
<dbReference type="HOGENOM" id="CLU_025194_2_1_11"/>
<dbReference type="UniPathway" id="UPA00314">
    <property type="reaction ID" value="UER00076"/>
</dbReference>
<dbReference type="Proteomes" id="UP000002198">
    <property type="component" value="Chromosome"/>
</dbReference>
<dbReference type="GO" id="GO:0005829">
    <property type="term" value="C:cytosol"/>
    <property type="evidence" value="ECO:0007669"/>
    <property type="project" value="TreeGrafter"/>
</dbReference>
<dbReference type="GO" id="GO:0004013">
    <property type="term" value="F:adenosylhomocysteinase activity"/>
    <property type="evidence" value="ECO:0007669"/>
    <property type="project" value="UniProtKB-UniRule"/>
</dbReference>
<dbReference type="GO" id="GO:0071269">
    <property type="term" value="P:L-homocysteine biosynthetic process"/>
    <property type="evidence" value="ECO:0007669"/>
    <property type="project" value="UniProtKB-UniRule"/>
</dbReference>
<dbReference type="GO" id="GO:0006730">
    <property type="term" value="P:one-carbon metabolic process"/>
    <property type="evidence" value="ECO:0007669"/>
    <property type="project" value="UniProtKB-KW"/>
</dbReference>
<dbReference type="GO" id="GO:0033353">
    <property type="term" value="P:S-adenosylmethionine cycle"/>
    <property type="evidence" value="ECO:0007669"/>
    <property type="project" value="TreeGrafter"/>
</dbReference>
<dbReference type="CDD" id="cd00401">
    <property type="entry name" value="SAHH"/>
    <property type="match status" value="1"/>
</dbReference>
<dbReference type="FunFam" id="3.40.50.720:FF:000004">
    <property type="entry name" value="Adenosylhomocysteinase"/>
    <property type="match status" value="1"/>
</dbReference>
<dbReference type="Gene3D" id="3.40.50.1480">
    <property type="entry name" value="Adenosylhomocysteinase-like"/>
    <property type="match status" value="1"/>
</dbReference>
<dbReference type="Gene3D" id="3.40.50.720">
    <property type="entry name" value="NAD(P)-binding Rossmann-like Domain"/>
    <property type="match status" value="1"/>
</dbReference>
<dbReference type="HAMAP" id="MF_00563">
    <property type="entry name" value="AdoHcyase"/>
    <property type="match status" value="1"/>
</dbReference>
<dbReference type="InterPro" id="IPR042172">
    <property type="entry name" value="Adenosylhomocyst_ase-like_sf"/>
</dbReference>
<dbReference type="InterPro" id="IPR000043">
    <property type="entry name" value="Adenosylhomocysteinase-like"/>
</dbReference>
<dbReference type="InterPro" id="IPR015878">
    <property type="entry name" value="Ado_hCys_hydrolase_NAD-bd"/>
</dbReference>
<dbReference type="InterPro" id="IPR036291">
    <property type="entry name" value="NAD(P)-bd_dom_sf"/>
</dbReference>
<dbReference type="InterPro" id="IPR020082">
    <property type="entry name" value="S-Ado-L-homoCys_hydrolase_CS"/>
</dbReference>
<dbReference type="NCBIfam" id="TIGR00936">
    <property type="entry name" value="ahcY"/>
    <property type="match status" value="1"/>
</dbReference>
<dbReference type="NCBIfam" id="NF004005">
    <property type="entry name" value="PRK05476.2-3"/>
    <property type="match status" value="1"/>
</dbReference>
<dbReference type="PANTHER" id="PTHR23420">
    <property type="entry name" value="ADENOSYLHOMOCYSTEINASE"/>
    <property type="match status" value="1"/>
</dbReference>
<dbReference type="PANTHER" id="PTHR23420:SF0">
    <property type="entry name" value="ADENOSYLHOMOCYSTEINASE"/>
    <property type="match status" value="1"/>
</dbReference>
<dbReference type="Pfam" id="PF05221">
    <property type="entry name" value="AdoHcyase"/>
    <property type="match status" value="1"/>
</dbReference>
<dbReference type="Pfam" id="PF00670">
    <property type="entry name" value="AdoHcyase_NAD"/>
    <property type="match status" value="1"/>
</dbReference>
<dbReference type="PIRSF" id="PIRSF001109">
    <property type="entry name" value="Ad_hcy_hydrolase"/>
    <property type="match status" value="1"/>
</dbReference>
<dbReference type="SMART" id="SM00996">
    <property type="entry name" value="AdoHcyase"/>
    <property type="match status" value="1"/>
</dbReference>
<dbReference type="SMART" id="SM00997">
    <property type="entry name" value="AdoHcyase_NAD"/>
    <property type="match status" value="1"/>
</dbReference>
<dbReference type="SUPFAM" id="SSF52283">
    <property type="entry name" value="Formate/glycerate dehydrogenase catalytic domain-like"/>
    <property type="match status" value="1"/>
</dbReference>
<dbReference type="SUPFAM" id="SSF51735">
    <property type="entry name" value="NAD(P)-binding Rossmann-fold domains"/>
    <property type="match status" value="1"/>
</dbReference>
<dbReference type="PROSITE" id="PS00738">
    <property type="entry name" value="ADOHCYASE_1"/>
    <property type="match status" value="1"/>
</dbReference>
<dbReference type="PROSITE" id="PS00739">
    <property type="entry name" value="ADOHCYASE_2"/>
    <property type="match status" value="1"/>
</dbReference>
<accession>P61456</accession>
<sequence>MAAFDYNVKDLSLAEAGRHQIRLAEYEMPGLMQLREEYQQEQPLAGARITGSIHMTVQTAVLIETLVALGAQVRWASCNIFSTQDEAAAAVVVGPHGTPEDPQGVPVFAWKGETLEEYWDCVDKIFSWGDELPNMILDDGGDATMAVIRGKQFEEAGMVPPVEEGDSDEYQAFLGMLRKTLAEQPGKWTAIAESVKGVTEETTTGVHRLYHFAEEGVLPFPAMNVNDAVTKSKFDNKYGTRHSLIDGINRATDMLMGGKNVLICGYGDVGKGCAEAMAGQGARVKVTEADPINALQALMDGFPVVHVDQAIGDADIVITATGNMGIISFEQMLAMKDHAVLGNIGHFDNEIDMASLLHRDDVSRVTIKPQVDEFTLPNGKSIVVLSEGRLLNLGNATGHPSFVMSTSFADQTIAQIELFQNDGRYVNEVYRLPKILDEKVARIHVEALGGTITELTKEQAEYIGVDVAGPYKPEHYRY</sequence>
<organism>
    <name type="scientific">Corynebacterium diphtheriae (strain ATCC 700971 / NCTC 13129 / Biotype gravis)</name>
    <dbReference type="NCBI Taxonomy" id="257309"/>
    <lineage>
        <taxon>Bacteria</taxon>
        <taxon>Bacillati</taxon>
        <taxon>Actinomycetota</taxon>
        <taxon>Actinomycetes</taxon>
        <taxon>Mycobacteriales</taxon>
        <taxon>Corynebacteriaceae</taxon>
        <taxon>Corynebacterium</taxon>
    </lineage>
</organism>
<protein>
    <recommendedName>
        <fullName evidence="1">Adenosylhomocysteinase</fullName>
        <ecNumber evidence="1">3.13.2.1</ecNumber>
    </recommendedName>
    <alternativeName>
        <fullName evidence="1">S-adenosyl-L-homocysteine hydrolase</fullName>
        <shortName evidence="1">AdoHcyase</shortName>
    </alternativeName>
</protein>
<gene>
    <name evidence="1" type="primary">ahcY</name>
    <name type="synonym">sahH</name>
    <name type="ordered locus">DIP0692</name>
</gene>
<proteinExistence type="inferred from homology"/>
<name>SAHH_CORDI</name>
<feature type="chain" id="PRO_0000116958" description="Adenosylhomocysteinase">
    <location>
        <begin position="1"/>
        <end position="478"/>
    </location>
</feature>
<feature type="binding site" evidence="1">
    <location>
        <position position="56"/>
    </location>
    <ligand>
        <name>substrate</name>
    </ligand>
</feature>
<feature type="binding site" evidence="1">
    <location>
        <position position="139"/>
    </location>
    <ligand>
        <name>substrate</name>
    </ligand>
</feature>
<feature type="binding site" evidence="1">
    <location>
        <position position="201"/>
    </location>
    <ligand>
        <name>substrate</name>
    </ligand>
</feature>
<feature type="binding site" evidence="1">
    <location>
        <begin position="202"/>
        <end position="204"/>
    </location>
    <ligand>
        <name>NAD(+)</name>
        <dbReference type="ChEBI" id="CHEBI:57540"/>
    </ligand>
</feature>
<feature type="binding site" evidence="1">
    <location>
        <position position="231"/>
    </location>
    <ligand>
        <name>substrate</name>
    </ligand>
</feature>
<feature type="binding site" evidence="1">
    <location>
        <position position="235"/>
    </location>
    <ligand>
        <name>substrate</name>
    </ligand>
</feature>
<feature type="binding site" evidence="1">
    <location>
        <position position="236"/>
    </location>
    <ligand>
        <name>NAD(+)</name>
        <dbReference type="ChEBI" id="CHEBI:57540"/>
    </ligand>
</feature>
<feature type="binding site" evidence="1">
    <location>
        <begin position="265"/>
        <end position="270"/>
    </location>
    <ligand>
        <name>NAD(+)</name>
        <dbReference type="ChEBI" id="CHEBI:57540"/>
    </ligand>
</feature>
<feature type="binding site" evidence="1">
    <location>
        <position position="288"/>
    </location>
    <ligand>
        <name>NAD(+)</name>
        <dbReference type="ChEBI" id="CHEBI:57540"/>
    </ligand>
</feature>
<feature type="binding site" evidence="1">
    <location>
        <position position="323"/>
    </location>
    <ligand>
        <name>NAD(+)</name>
        <dbReference type="ChEBI" id="CHEBI:57540"/>
    </ligand>
</feature>
<feature type="binding site" evidence="1">
    <location>
        <begin position="344"/>
        <end position="346"/>
    </location>
    <ligand>
        <name>NAD(+)</name>
        <dbReference type="ChEBI" id="CHEBI:57540"/>
    </ligand>
</feature>
<feature type="binding site" evidence="1">
    <location>
        <position position="392"/>
    </location>
    <ligand>
        <name>NAD(+)</name>
        <dbReference type="ChEBI" id="CHEBI:57540"/>
    </ligand>
</feature>
<keyword id="KW-0963">Cytoplasm</keyword>
<keyword id="KW-0378">Hydrolase</keyword>
<keyword id="KW-0520">NAD</keyword>
<keyword id="KW-0554">One-carbon metabolism</keyword>
<keyword id="KW-1185">Reference proteome</keyword>
<evidence type="ECO:0000255" key="1">
    <source>
        <dbReference type="HAMAP-Rule" id="MF_00563"/>
    </source>
</evidence>